<gene>
    <name evidence="5" type="primary">psbP</name>
    <name evidence="10" type="ordered locus">sll1418</name>
</gene>
<accession>P73952</accession>
<sequence>MLKKSLSTAVVLVTLLLSFTLTACGGVGIASLQRYSDTKDGYEFLYPNGWIGVDVKGASPGVDVVFRDLIERDENLSVIISEIPSDKTLTDLGTATDVGYRFMKTVNDASQGDRQAELINAEARDEDGQVYYTLEYRVLVGDNVERHDLASVTTNRGKLITFDLSTAEDRWDTVKSLFDTVASSFHVY</sequence>
<organism>
    <name type="scientific">Synechocystis sp. (strain ATCC 27184 / PCC 6803 / Kazusa)</name>
    <dbReference type="NCBI Taxonomy" id="1111708"/>
    <lineage>
        <taxon>Bacteria</taxon>
        <taxon>Bacillati</taxon>
        <taxon>Cyanobacteriota</taxon>
        <taxon>Cyanophyceae</taxon>
        <taxon>Synechococcales</taxon>
        <taxon>Merismopediaceae</taxon>
        <taxon>Synechocystis</taxon>
    </lineage>
</organism>
<keyword id="KW-0002">3D-structure</keyword>
<keyword id="KW-0449">Lipoprotein</keyword>
<keyword id="KW-0472">Membrane</keyword>
<keyword id="KW-0564">Palmitate</keyword>
<keyword id="KW-0602">Photosynthesis</keyword>
<keyword id="KW-0604">Photosystem II</keyword>
<keyword id="KW-1185">Reference proteome</keyword>
<keyword id="KW-0732">Signal</keyword>
<keyword id="KW-0793">Thylakoid</keyword>
<name>PSBP_SYNY3</name>
<proteinExistence type="evidence at protein level"/>
<evidence type="ECO:0000255" key="1">
    <source>
        <dbReference type="PROSITE-ProRule" id="PRU00303"/>
    </source>
</evidence>
<evidence type="ECO:0000269" key="2">
    <source>
    </source>
</evidence>
<evidence type="ECO:0000269" key="3">
    <source>
    </source>
</evidence>
<evidence type="ECO:0000269" key="4">
    <source>
    </source>
</evidence>
<evidence type="ECO:0000303" key="5">
    <source>
    </source>
</evidence>
<evidence type="ECO:0000303" key="6">
    <source>
    </source>
</evidence>
<evidence type="ECO:0000305" key="7"/>
<evidence type="ECO:0000305" key="8">
    <source>
    </source>
</evidence>
<evidence type="ECO:0000305" key="9">
    <source>
    </source>
</evidence>
<evidence type="ECO:0000312" key="10">
    <source>
        <dbReference type="EMBL" id="BAA18019.1"/>
    </source>
</evidence>
<evidence type="ECO:0007744" key="11">
    <source>
        <dbReference type="PDB" id="2LNJ"/>
    </source>
</evidence>
<evidence type="ECO:0007829" key="12">
    <source>
        <dbReference type="PDB" id="2LNJ"/>
    </source>
</evidence>
<dbReference type="EMBL" id="BA000022">
    <property type="protein sequence ID" value="BAA18019.1"/>
    <property type="molecule type" value="Genomic_DNA"/>
</dbReference>
<dbReference type="PIR" id="S75458">
    <property type="entry name" value="S75458"/>
</dbReference>
<dbReference type="PDB" id="2LNJ">
    <property type="method" value="NMR"/>
    <property type="chains" value="A=24-188"/>
</dbReference>
<dbReference type="PDBsum" id="2LNJ"/>
<dbReference type="SMR" id="P73952"/>
<dbReference type="IntAct" id="P73952">
    <property type="interactions" value="9"/>
</dbReference>
<dbReference type="STRING" id="1148.gene:10498889"/>
<dbReference type="PaxDb" id="1148-1653103"/>
<dbReference type="EnsemblBacteria" id="BAA18019">
    <property type="protein sequence ID" value="BAA18019"/>
    <property type="gene ID" value="BAA18019"/>
</dbReference>
<dbReference type="KEGG" id="syn:sll1418"/>
<dbReference type="eggNOG" id="ENOG502ZCA9">
    <property type="taxonomic scope" value="Bacteria"/>
</dbReference>
<dbReference type="InParanoid" id="P73952"/>
<dbReference type="PhylomeDB" id="P73952"/>
<dbReference type="EvolutionaryTrace" id="P73952"/>
<dbReference type="Proteomes" id="UP000001425">
    <property type="component" value="Chromosome"/>
</dbReference>
<dbReference type="GO" id="GO:0019898">
    <property type="term" value="C:extrinsic component of membrane"/>
    <property type="evidence" value="ECO:0007669"/>
    <property type="project" value="InterPro"/>
</dbReference>
<dbReference type="GO" id="GO:0009654">
    <property type="term" value="C:photosystem II oxygen evolving complex"/>
    <property type="evidence" value="ECO:0007669"/>
    <property type="project" value="InterPro"/>
</dbReference>
<dbReference type="GO" id="GO:0031676">
    <property type="term" value="C:plasma membrane-derived thylakoid membrane"/>
    <property type="evidence" value="ECO:0007669"/>
    <property type="project" value="UniProtKB-SubCell"/>
</dbReference>
<dbReference type="GO" id="GO:0005509">
    <property type="term" value="F:calcium ion binding"/>
    <property type="evidence" value="ECO:0007669"/>
    <property type="project" value="InterPro"/>
</dbReference>
<dbReference type="GO" id="GO:0015979">
    <property type="term" value="P:photosynthesis"/>
    <property type="evidence" value="ECO:0007669"/>
    <property type="project" value="UniProtKB-KW"/>
</dbReference>
<dbReference type="Gene3D" id="3.40.1000.10">
    <property type="entry name" value="Mog1/PsbP, alpha/beta/alpha sandwich"/>
    <property type="match status" value="1"/>
</dbReference>
<dbReference type="InterPro" id="IPR016123">
    <property type="entry name" value="Mog1/PsbP_a/b/a-sand"/>
</dbReference>
<dbReference type="InterPro" id="IPR002683">
    <property type="entry name" value="PsbP_C"/>
</dbReference>
<dbReference type="NCBIfam" id="NF040946">
    <property type="entry name" value="PSII_PsbP"/>
    <property type="match status" value="1"/>
</dbReference>
<dbReference type="PANTHER" id="PTHR31407">
    <property type="match status" value="1"/>
</dbReference>
<dbReference type="PANTHER" id="PTHR31407:SF16">
    <property type="entry name" value="PSBP DOMAIN-CONTAINING PROTEIN 7, CHLOROPLASTIC"/>
    <property type="match status" value="1"/>
</dbReference>
<dbReference type="Pfam" id="PF01789">
    <property type="entry name" value="PsbP"/>
    <property type="match status" value="1"/>
</dbReference>
<dbReference type="SUPFAM" id="SSF55724">
    <property type="entry name" value="Mog1p/PsbP-like"/>
    <property type="match status" value="1"/>
</dbReference>
<dbReference type="PROSITE" id="PS51257">
    <property type="entry name" value="PROKAR_LIPOPROTEIN"/>
    <property type="match status" value="1"/>
</dbReference>
<protein>
    <recommendedName>
        <fullName evidence="6">CyanoP</fullName>
    </recommendedName>
    <alternativeName>
        <fullName evidence="7">Photosystem II lipoprotein PsbP</fullName>
    </alternativeName>
</protein>
<reference evidence="10" key="1">
    <citation type="journal article" date="1996" name="DNA Res.">
        <title>Sequence analysis of the genome of the unicellular cyanobacterium Synechocystis sp. strain PCC6803. II. Sequence determination of the entire genome and assignment of potential protein-coding regions.</title>
        <authorList>
            <person name="Kaneko T."/>
            <person name="Sato S."/>
            <person name="Kotani H."/>
            <person name="Tanaka A."/>
            <person name="Asamizu E."/>
            <person name="Nakamura Y."/>
            <person name="Miyajima N."/>
            <person name="Hirosawa M."/>
            <person name="Sugiura M."/>
            <person name="Sasamoto S."/>
            <person name="Kimura T."/>
            <person name="Hosouchi T."/>
            <person name="Matsuno A."/>
            <person name="Muraki A."/>
            <person name="Nakazaki N."/>
            <person name="Naruo K."/>
            <person name="Okumura S."/>
            <person name="Shimpo S."/>
            <person name="Takeuchi C."/>
            <person name="Wada T."/>
            <person name="Watanabe A."/>
            <person name="Yamada M."/>
            <person name="Yasuda M."/>
            <person name="Tabata S."/>
        </authorList>
    </citation>
    <scope>NUCLEOTIDE SEQUENCE [LARGE SCALE GENOMIC DNA]</scope>
    <source>
        <strain>ATCC 27184 / PCC 6803 / Kazusa</strain>
    </source>
</reference>
<reference key="2">
    <citation type="journal article" date="2004" name="Plant Cell">
        <title>Homologs of plant PsbP and PsbQ proteins are necessary for regulation of photosystem II activity in the cyanobacterium Synechocystis 6803.</title>
        <authorList>
            <person name="Thornton L.E."/>
            <person name="Ohkawa H."/>
            <person name="Roose J.L."/>
            <person name="Kashino Y."/>
            <person name="Keren N."/>
            <person name="Pakrasi H.B."/>
        </authorList>
    </citation>
    <scope>FUNCTION</scope>
    <scope>SUBUNIT</scope>
    <scope>SUBCELLULAR LOCATION</scope>
    <scope>DISRUPTION PHENOTYPE</scope>
    <source>
        <strain>ATCC 27184 / PCC 6803 / Kazusa</strain>
    </source>
</reference>
<reference key="3">
    <citation type="journal article" date="2016" name="Plant Cell Physiol.">
        <title>CyanoP is Involved in the Early Steps of Photosystem II Assembly in the Cyanobacterium Synechocystis sp. PCC 6803.</title>
        <authorList>
            <person name="Knoppova J."/>
            <person name="Yu J."/>
            <person name="Konik P."/>
            <person name="Nixon P.J."/>
            <person name="Komenda J."/>
        </authorList>
    </citation>
    <scope>FUNCTION</scope>
    <scope>SUBUNIT</scope>
    <scope>SUBCELLULAR LOCATION</scope>
    <scope>DISRUPTION PHENOTYPE</scope>
    <source>
        <strain>ATCC 27184 / PCC 6803 / Kazusa</strain>
    </source>
</reference>
<reference evidence="11" key="4">
    <citation type="journal article" date="2012" name="Biochim. Biophys. Acta">
        <title>Solution structure of CyanoP from Synechocystis sp. PCC 6803: new insights on the structural basis for functional specialization amongst PsbP family proteins.</title>
        <authorList>
            <person name="Jackson S.A."/>
            <person name="Hinds M.G."/>
            <person name="Eaton-Rye J.J."/>
        </authorList>
    </citation>
    <scope>STRUCTURE BY NMR OF 24-188</scope>
    <scope>SUBUNIT</scope>
    <source>
        <strain>ATCC 27184 / PCC 6803 / Kazusa</strain>
    </source>
</reference>
<comment type="function">
    <text evidence="2 4">Plays a role in the early stages of photosystem II (PSII) assembly; binds to D2 (psbD) and may facilitate its incorporation into PSII (PubMed:27388341). Required for optimal photoautotrophic growth in the absence of Ca(2+) or Cl(-), functions in optimizing PSII water oxidation/O(2) evolving activity. Might be involved in assembly of the oxygen evolving complex (PubMed:15258264).</text>
</comment>
<comment type="subunit">
    <text evidence="2 3 4">Monomer (PubMed:22414666). Present in about 3% of photosystem II (PSII) preparations (PubMed:15258264). Purifies with partially assembled PSII complexes, in addition to a small amount of monomeric and dimeric PSII, and trimeric PSI (PubMed:27388341).</text>
</comment>
<comment type="subcellular location">
    <subcellularLocation>
        <location evidence="1 2 4">Cellular thylakoid membrane</location>
        <topology evidence="1">Lipid-anchor</topology>
        <orientation evidence="7">Lumenal side</orientation>
    </subcellularLocation>
    <text evidence="8 9">Probably associated with PSII at the lumenal side of the thylakoid membrane.</text>
</comment>
<comment type="disruption phenotype">
    <text evidence="2 4">Wild-type growth in BG11 medium, 30 degrees Celsius 30 umol photons/m(2)/s; slightly reduced growth in Ca(2+) or Cl(-) deleted medium. Up to 40% decreased rates of O(2) evolution (PubMed:15258264). Increased accumulation of unprocessed, partially processed and processed D1 protein (psbA); fragmentation of thylakoid membrane proteins PsbE, chlorophyll synthase ChlG, and membrane protein insertase YidC (PubMed:27388341).</text>
</comment>
<comment type="similarity">
    <text evidence="7">Belongs to the PsbP family. CyanoP subfamily.</text>
</comment>
<feature type="signal peptide" evidence="1">
    <location>
        <begin position="1"/>
        <end position="23"/>
    </location>
</feature>
<feature type="chain" id="PRO_5004161295" description="CyanoP" evidence="1">
    <location>
        <begin position="24"/>
        <end position="188"/>
    </location>
</feature>
<feature type="lipid moiety-binding region" description="N-palmitoyl cysteine" evidence="1">
    <location>
        <position position="24"/>
    </location>
</feature>
<feature type="lipid moiety-binding region" description="S-diacylglycerol cysteine" evidence="1">
    <location>
        <position position="24"/>
    </location>
</feature>
<feature type="strand" evidence="12">
    <location>
        <begin position="30"/>
        <end position="37"/>
    </location>
</feature>
<feature type="turn" evidence="12">
    <location>
        <begin position="38"/>
        <end position="41"/>
    </location>
</feature>
<feature type="strand" evidence="12">
    <location>
        <begin position="42"/>
        <end position="47"/>
    </location>
</feature>
<feature type="strand" evidence="12">
    <location>
        <begin position="50"/>
        <end position="54"/>
    </location>
</feature>
<feature type="strand" evidence="12">
    <location>
        <begin position="62"/>
        <end position="70"/>
    </location>
</feature>
<feature type="strand" evidence="12">
    <location>
        <begin position="75"/>
        <end position="82"/>
    </location>
</feature>
<feature type="helix" evidence="12">
    <location>
        <begin position="89"/>
        <end position="92"/>
    </location>
</feature>
<feature type="helix" evidence="12">
    <location>
        <begin position="95"/>
        <end position="110"/>
    </location>
</feature>
<feature type="strand" evidence="12">
    <location>
        <begin position="112"/>
        <end position="126"/>
    </location>
</feature>
<feature type="strand" evidence="12">
    <location>
        <begin position="129"/>
        <end position="140"/>
    </location>
</feature>
<feature type="strand" evidence="12">
    <location>
        <begin position="143"/>
        <end position="155"/>
    </location>
</feature>
<feature type="strand" evidence="12">
    <location>
        <begin position="158"/>
        <end position="166"/>
    </location>
</feature>
<feature type="helix" evidence="12">
    <location>
        <begin position="168"/>
        <end position="171"/>
    </location>
</feature>
<feature type="turn" evidence="12">
    <location>
        <begin position="172"/>
        <end position="174"/>
    </location>
</feature>
<feature type="helix" evidence="12">
    <location>
        <begin position="175"/>
        <end position="184"/>
    </location>
</feature>